<sequence>MLRYAIIFFIIAIIAAVFGFGGIAAGAAEIAKILFYIFVVIFLVTLLLGVVRR</sequence>
<reference key="1">
    <citation type="submission" date="2008-02" db="EMBL/GenBank/DDBJ databases">
        <title>Complete sequence of chromosome 3 of Burkholderia cenocepacia MC0-3.</title>
        <authorList>
            <person name="Copeland A."/>
            <person name="Lucas S."/>
            <person name="Lapidus A."/>
            <person name="Barry K."/>
            <person name="Bruce D."/>
            <person name="Goodwin L."/>
            <person name="Glavina del Rio T."/>
            <person name="Dalin E."/>
            <person name="Tice H."/>
            <person name="Pitluck S."/>
            <person name="Chain P."/>
            <person name="Malfatti S."/>
            <person name="Shin M."/>
            <person name="Vergez L."/>
            <person name="Schmutz J."/>
            <person name="Larimer F."/>
            <person name="Land M."/>
            <person name="Hauser L."/>
            <person name="Kyrpides N."/>
            <person name="Mikhailova N."/>
            <person name="Tiedje J."/>
            <person name="Richardson P."/>
        </authorList>
    </citation>
    <scope>NUCLEOTIDE SEQUENCE [LARGE SCALE GENOMIC DNA]</scope>
    <source>
        <strain>MC0-3</strain>
    </source>
</reference>
<name>Y6069_BURO0</name>
<protein>
    <recommendedName>
        <fullName evidence="1">UPF0391 membrane protein Bcenmc03_6069</fullName>
    </recommendedName>
</protein>
<keyword id="KW-1003">Cell membrane</keyword>
<keyword id="KW-0472">Membrane</keyword>
<keyword id="KW-0812">Transmembrane</keyword>
<keyword id="KW-1133">Transmembrane helix</keyword>
<dbReference type="EMBL" id="CP000960">
    <property type="protein sequence ID" value="ACA95190.1"/>
    <property type="molecule type" value="Genomic_DNA"/>
</dbReference>
<dbReference type="RefSeq" id="WP_006767422.1">
    <property type="nucleotide sequence ID" value="NC_010512.1"/>
</dbReference>
<dbReference type="KEGG" id="bcm:Bcenmc03_6069"/>
<dbReference type="HOGENOM" id="CLU_187346_0_1_4"/>
<dbReference type="Proteomes" id="UP000002169">
    <property type="component" value="Chromosome 3"/>
</dbReference>
<dbReference type="GO" id="GO:0005886">
    <property type="term" value="C:plasma membrane"/>
    <property type="evidence" value="ECO:0007669"/>
    <property type="project" value="UniProtKB-SubCell"/>
</dbReference>
<dbReference type="HAMAP" id="MF_01361">
    <property type="entry name" value="UPF0391"/>
    <property type="match status" value="1"/>
</dbReference>
<dbReference type="InterPro" id="IPR009760">
    <property type="entry name" value="DUF1328"/>
</dbReference>
<dbReference type="NCBIfam" id="NF010226">
    <property type="entry name" value="PRK13682.1-1"/>
    <property type="match status" value="1"/>
</dbReference>
<dbReference type="NCBIfam" id="NF010229">
    <property type="entry name" value="PRK13682.1-4"/>
    <property type="match status" value="1"/>
</dbReference>
<dbReference type="Pfam" id="PF07043">
    <property type="entry name" value="DUF1328"/>
    <property type="match status" value="1"/>
</dbReference>
<dbReference type="PIRSF" id="PIRSF036466">
    <property type="entry name" value="UCP036466"/>
    <property type="match status" value="1"/>
</dbReference>
<accession>B1KAE3</accession>
<evidence type="ECO:0000255" key="1">
    <source>
        <dbReference type="HAMAP-Rule" id="MF_01361"/>
    </source>
</evidence>
<gene>
    <name type="ordered locus">Bcenmc03_6069</name>
</gene>
<comment type="subcellular location">
    <subcellularLocation>
        <location evidence="1">Cell membrane</location>
        <topology evidence="1">Multi-pass membrane protein</topology>
    </subcellularLocation>
</comment>
<comment type="similarity">
    <text evidence="1">Belongs to the UPF0391 family.</text>
</comment>
<organism>
    <name type="scientific">Burkholderia orbicola (strain MC0-3)</name>
    <dbReference type="NCBI Taxonomy" id="406425"/>
    <lineage>
        <taxon>Bacteria</taxon>
        <taxon>Pseudomonadati</taxon>
        <taxon>Pseudomonadota</taxon>
        <taxon>Betaproteobacteria</taxon>
        <taxon>Burkholderiales</taxon>
        <taxon>Burkholderiaceae</taxon>
        <taxon>Burkholderia</taxon>
        <taxon>Burkholderia cepacia complex</taxon>
        <taxon>Burkholderia orbicola</taxon>
    </lineage>
</organism>
<proteinExistence type="inferred from homology"/>
<feature type="chain" id="PRO_1000143707" description="UPF0391 membrane protein Bcenmc03_6069">
    <location>
        <begin position="1"/>
        <end position="53"/>
    </location>
</feature>
<feature type="transmembrane region" description="Helical" evidence="1">
    <location>
        <begin position="5"/>
        <end position="25"/>
    </location>
</feature>
<feature type="transmembrane region" description="Helical" evidence="1">
    <location>
        <begin position="30"/>
        <end position="50"/>
    </location>
</feature>